<reference key="1">
    <citation type="submission" date="2006-03" db="EMBL/GenBank/DDBJ databases">
        <title>Complete sequence of Rhodopseudomonas palustris BisB18.</title>
        <authorList>
            <consortium name="US DOE Joint Genome Institute"/>
            <person name="Copeland A."/>
            <person name="Lucas S."/>
            <person name="Lapidus A."/>
            <person name="Barry K."/>
            <person name="Detter J.C."/>
            <person name="Glavina del Rio T."/>
            <person name="Hammon N."/>
            <person name="Israni S."/>
            <person name="Dalin E."/>
            <person name="Tice H."/>
            <person name="Pitluck S."/>
            <person name="Chain P."/>
            <person name="Malfatti S."/>
            <person name="Shin M."/>
            <person name="Vergez L."/>
            <person name="Schmutz J."/>
            <person name="Larimer F."/>
            <person name="Land M."/>
            <person name="Hauser L."/>
            <person name="Pelletier D.A."/>
            <person name="Kyrpides N."/>
            <person name="Anderson I."/>
            <person name="Oda Y."/>
            <person name="Harwood C.S."/>
            <person name="Richardson P."/>
        </authorList>
    </citation>
    <scope>NUCLEOTIDE SEQUENCE [LARGE SCALE GENOMIC DNA]</scope>
    <source>
        <strain>BisB18</strain>
    </source>
</reference>
<name>Y4416_RHOPB</name>
<comment type="similarity">
    <text evidence="1">Belongs to the UPF0262 family.</text>
</comment>
<sequence length="163" mass="18506">MSQQEPDDSRNCIVAVTLDEESIGRSGPDIEHERAIAIYDLVEKNLFAPQGGGEGPYTLHIGITGNRLMFDIRREDGSPVMVHLLSLTPFRRIVKDYFMICDSYYQAIRTATPDKIEAIDMGRRGIHDEGSRTLQERLAGKVRIDFETARRLFTLISVLHWKG</sequence>
<proteinExistence type="inferred from homology"/>
<organism>
    <name type="scientific">Rhodopseudomonas palustris (strain BisB18)</name>
    <dbReference type="NCBI Taxonomy" id="316056"/>
    <lineage>
        <taxon>Bacteria</taxon>
        <taxon>Pseudomonadati</taxon>
        <taxon>Pseudomonadota</taxon>
        <taxon>Alphaproteobacteria</taxon>
        <taxon>Hyphomicrobiales</taxon>
        <taxon>Nitrobacteraceae</taxon>
        <taxon>Rhodopseudomonas</taxon>
    </lineage>
</organism>
<accession>Q20Y47</accession>
<evidence type="ECO:0000255" key="1">
    <source>
        <dbReference type="HAMAP-Rule" id="MF_00678"/>
    </source>
</evidence>
<gene>
    <name type="ordered locus">RPC_4416</name>
</gene>
<protein>
    <recommendedName>
        <fullName evidence="1">UPF0262 protein RPC_4416</fullName>
    </recommendedName>
</protein>
<dbReference type="EMBL" id="CP000301">
    <property type="protein sequence ID" value="ABD89939.1"/>
    <property type="molecule type" value="Genomic_DNA"/>
</dbReference>
<dbReference type="STRING" id="316056.RPC_4416"/>
<dbReference type="KEGG" id="rpc:RPC_4416"/>
<dbReference type="eggNOG" id="COG5328">
    <property type="taxonomic scope" value="Bacteria"/>
</dbReference>
<dbReference type="HOGENOM" id="CLU_112904_0_0_5"/>
<dbReference type="OrthoDB" id="9798434at2"/>
<dbReference type="HAMAP" id="MF_00678">
    <property type="entry name" value="UPF0262"/>
    <property type="match status" value="1"/>
</dbReference>
<dbReference type="InterPro" id="IPR008321">
    <property type="entry name" value="UCP032146"/>
</dbReference>
<dbReference type="NCBIfam" id="NF002769">
    <property type="entry name" value="PRK02853.1"/>
    <property type="match status" value="1"/>
</dbReference>
<dbReference type="Pfam" id="PF06793">
    <property type="entry name" value="UPF0262"/>
    <property type="match status" value="1"/>
</dbReference>
<dbReference type="PIRSF" id="PIRSF032146">
    <property type="entry name" value="UCP032146"/>
    <property type="match status" value="1"/>
</dbReference>
<feature type="chain" id="PRO_0000314212" description="UPF0262 protein RPC_4416">
    <location>
        <begin position="1"/>
        <end position="163"/>
    </location>
</feature>